<sequence>MESLAQLPGIFLPLAGCVLALSLSALLAVGPIVRVTPTEVDICDLPAVREIHRVRGGYLKSEWYKSLTPPGVTSLLTLIEPTQYSEWRRLLAGPLSDTSLGKVEPMVTNHVHATIDRIASDLQSQGVSDLYKWWTYMATDVVSELSFGEPIGLLARPKETAWVMDYLDKVGIMHAWRTTFPFVFVLGRFMPVHPFKHAIQAIGLLGKWARRSIQQYRQHIQEQPESPKPTLFTKLFKADKFDDFQLTYLAGSYITAGSHTTAVTLLYLIYAICRDNEIRQKLLAEIRTLPENFRHDELRHLPYLNQVITETLRKYAVVSSALPRVVPAGGATLAGYYLPGGTTVSTQAYTLHRNEAIFPNPEKYKPNPKYSYLSMLSVWLIECRFDPSRWESPTQEMKDAYMPFGGASRMCIGNSLALMEIRLTTTLFLRRFPEVQMSRQNGMRDEDLAQEQYLIMAPRGHRLLVEA</sequence>
<proteinExistence type="evidence at transcript level"/>
<protein>
    <recommendedName>
        <fullName evidence="4">Cytochrome P450 monooxygenase azaI</fullName>
        <ecNumber evidence="6">1.-.-.-</ecNumber>
    </recommendedName>
    <alternativeName>
        <fullName evidence="4">Azaphilone biosynthesis cluster protein azaI</fullName>
    </alternativeName>
</protein>
<reference key="1">
    <citation type="journal article" date="2011" name="Genome Res.">
        <title>Comparative genomics of citric-acid-producing Aspergillus niger ATCC 1015 versus enzyme-producing CBS 513.88.</title>
        <authorList>
            <person name="Andersen M.R."/>
            <person name="Salazar M.P."/>
            <person name="Schaap P.J."/>
            <person name="van de Vondervoort P.J.I."/>
            <person name="Culley D."/>
            <person name="Thykaer J."/>
            <person name="Frisvad J.C."/>
            <person name="Nielsen K.F."/>
            <person name="Albang R."/>
            <person name="Albermann K."/>
            <person name="Berka R.M."/>
            <person name="Braus G.H."/>
            <person name="Braus-Stromeyer S.A."/>
            <person name="Corrochano L.M."/>
            <person name="Dai Z."/>
            <person name="van Dijck P.W.M."/>
            <person name="Hofmann G."/>
            <person name="Lasure L.L."/>
            <person name="Magnuson J.K."/>
            <person name="Menke H."/>
            <person name="Meijer M."/>
            <person name="Meijer S.L."/>
            <person name="Nielsen J.B."/>
            <person name="Nielsen M.L."/>
            <person name="van Ooyen A.J.J."/>
            <person name="Pel H.J."/>
            <person name="Poulsen L."/>
            <person name="Samson R.A."/>
            <person name="Stam H."/>
            <person name="Tsang A."/>
            <person name="van den Brink J.M."/>
            <person name="Atkins A."/>
            <person name="Aerts A."/>
            <person name="Shapiro H."/>
            <person name="Pangilinan J."/>
            <person name="Salamov A."/>
            <person name="Lou Y."/>
            <person name="Lindquist E."/>
            <person name="Lucas S."/>
            <person name="Grimwood J."/>
            <person name="Grigoriev I.V."/>
            <person name="Kubicek C.P."/>
            <person name="Martinez D."/>
            <person name="van Peij N.N.M.E."/>
            <person name="Roubos J.A."/>
            <person name="Nielsen J."/>
            <person name="Baker S.E."/>
        </authorList>
    </citation>
    <scope>NUCLEOTIDE SEQUENCE [LARGE SCALE GENOMIC DNA]</scope>
    <source>
        <strain>ATCC 1015 / CBS 113.46 / FGSC A1144 / LSHB Ac4 / NCTC 3858a / NRRL 328 / USDA 3528.7</strain>
    </source>
</reference>
<reference key="2">
    <citation type="journal article" date="2012" name="Chem. Biol.">
        <title>Characterization of a silent azaphilone gene cluster from Aspergillus niger ATCC 1015 reveals a hydroxylation-mediated pyran-ring formation.</title>
        <authorList>
            <person name="Zabala A.O."/>
            <person name="Xu W."/>
            <person name="Chooi Y.H."/>
            <person name="Tang Y."/>
        </authorList>
    </citation>
    <scope>FUNCTION</scope>
    <scope>INDUCTION</scope>
</reference>
<evidence type="ECO:0000250" key="1">
    <source>
        <dbReference type="UniProtKB" id="P04798"/>
    </source>
</evidence>
<evidence type="ECO:0000255" key="2"/>
<evidence type="ECO:0000269" key="3">
    <source>
    </source>
</evidence>
<evidence type="ECO:0000303" key="4">
    <source>
    </source>
</evidence>
<evidence type="ECO:0000305" key="5"/>
<evidence type="ECO:0000305" key="6">
    <source>
    </source>
</evidence>
<gene>
    <name evidence="4" type="primary">azaI</name>
    <name type="ORF">ASPNIDRAFT_43449</name>
</gene>
<dbReference type="EC" id="1.-.-.-" evidence="6"/>
<dbReference type="EMBL" id="ACJE01000001">
    <property type="protein sequence ID" value="EHA28236.1"/>
    <property type="molecule type" value="Genomic_DNA"/>
</dbReference>
<dbReference type="SMR" id="G3XMC3"/>
<dbReference type="STRING" id="380704.G3XMC3"/>
<dbReference type="KEGG" id="ag:EHA28236"/>
<dbReference type="HOGENOM" id="CLU_001570_14_2_1"/>
<dbReference type="OrthoDB" id="97391at5052"/>
<dbReference type="Proteomes" id="UP000009038">
    <property type="component" value="Unassembled WGS sequence"/>
</dbReference>
<dbReference type="GO" id="GO:0020037">
    <property type="term" value="F:heme binding"/>
    <property type="evidence" value="ECO:0007669"/>
    <property type="project" value="InterPro"/>
</dbReference>
<dbReference type="GO" id="GO:0005506">
    <property type="term" value="F:iron ion binding"/>
    <property type="evidence" value="ECO:0007669"/>
    <property type="project" value="InterPro"/>
</dbReference>
<dbReference type="GO" id="GO:0004497">
    <property type="term" value="F:monooxygenase activity"/>
    <property type="evidence" value="ECO:0007669"/>
    <property type="project" value="UniProtKB-KW"/>
</dbReference>
<dbReference type="GO" id="GO:0016705">
    <property type="term" value="F:oxidoreductase activity, acting on paired donors, with incorporation or reduction of molecular oxygen"/>
    <property type="evidence" value="ECO:0007669"/>
    <property type="project" value="InterPro"/>
</dbReference>
<dbReference type="CDD" id="cd11059">
    <property type="entry name" value="CYP_fungal"/>
    <property type="match status" value="1"/>
</dbReference>
<dbReference type="Gene3D" id="1.10.630.10">
    <property type="entry name" value="Cytochrome P450"/>
    <property type="match status" value="1"/>
</dbReference>
<dbReference type="InterPro" id="IPR001128">
    <property type="entry name" value="Cyt_P450"/>
</dbReference>
<dbReference type="InterPro" id="IPR002403">
    <property type="entry name" value="Cyt_P450_E_grp-IV"/>
</dbReference>
<dbReference type="InterPro" id="IPR036396">
    <property type="entry name" value="Cyt_P450_sf"/>
</dbReference>
<dbReference type="InterPro" id="IPR050121">
    <property type="entry name" value="Cytochrome_P450_monoxygenase"/>
</dbReference>
<dbReference type="PANTHER" id="PTHR24305">
    <property type="entry name" value="CYTOCHROME P450"/>
    <property type="match status" value="1"/>
</dbReference>
<dbReference type="PANTHER" id="PTHR24305:SF96">
    <property type="entry name" value="CYTOCHROME P450 MONOOXYGENASE STCB-RELATED"/>
    <property type="match status" value="1"/>
</dbReference>
<dbReference type="Pfam" id="PF00067">
    <property type="entry name" value="p450"/>
    <property type="match status" value="2"/>
</dbReference>
<dbReference type="PRINTS" id="PR00465">
    <property type="entry name" value="EP450IV"/>
</dbReference>
<dbReference type="PRINTS" id="PR00385">
    <property type="entry name" value="P450"/>
</dbReference>
<dbReference type="SUPFAM" id="SSF48264">
    <property type="entry name" value="Cytochrome P450"/>
    <property type="match status" value="1"/>
</dbReference>
<comment type="function">
    <text evidence="3">Cytochrome P450 monooxygenase; part of the gene cluster that mediates the biosynthesis of azaphilones, a class of fungal metabolites characterized by a highly oxygenated pyrano-quinone bicyclic core and exhibiting a broad range of bioactivities (PubMed:22921072). In the first step, the non-reducing polyketide synthase azaA forms the hexaketide precursor from successive condensations of five malonyl-CoA units, presumably with a simple acetyl-CoA starter unit (PubMed:22921072). The reactive polyketide chain then undergoes a PT-mediated C2-C7 cyclization to afford the aromatic ring and is eventually released as an aldehyde through the R-domain (PubMed:22921072). The putative ketoreductase azaE is proposed to catalyze the reduction of the terminal ketone resulting in the early culture product FK17-P2a (PubMed:22921072). The monooxygenase azaH was demonstrated to be the only enzyme required to convert FK17-P2a to azanigerone E (PubMed:22921072). AzaH first hydroxylates the benzaldehyde intermediate FK17-P2a at C4, which triggers the formation of the pyran-ring to afford azanigerone E (PubMed:22921072). In parallel, the 2,4-dimethylhexanoyl chain is synthesized by the HR-PKS azaB and is proposed to be transferred to the C4-hydroxyl of azanigerone E by the acyltransferase azaD directly from the ACP domain of azaB (PubMed:22921072). Alternatively, the 2,4-dimethyl-hexanoyl chain may be offloaded from the HR-PKS as a carboxylic acid and converted to an acyl-CoA by azaF (PubMed:22921072). The resulting acyl-CoA molecule could then be taken up as a substrate by AzaD to form azanigerone B (PubMed:22921072). To yield the carboxylic acid substituent in azanigerone A, the hydroxypropyl side chain of azanigerone B would need to undergo a C-C oxidative cleavage catalyzed by cytochrome P450 AzaI (PubMed:22921072). AzaI is proposed to act on a vicinal diol that leads to a C-C bond scission either through an alkoxyradical intermediate or a peroxy complex (PubMed:22921072). In the biosynthesis of azanigerone A, azanigerone B first undergoes hydroxylation at C10, possibly catalyzed by one of the two FAD-dependent monooxygenases encoded in the cluster, azaG or azaL, resulting in the vicinal diol azanigerone C (PubMed:22921072). Oxidative cleavage of azanigerone C by azaI would yield the corresponding aldehyde derivative of azanigerone A (PubMed:22921072). Finally, the dehydrogenase azaJ is proposed to convert the aldehyde functional group into the carboxylic acid, completing the conversion from azanigerone B to azanigerone A (PubMed:22921072). Alternatively, the oxidation of aldehyde to carboxylic acid may be catalyzed by the same P450 enzyme azaI via consecutive oxidation or by endogenous alcohol dehydrogenase (PubMed:22921072).</text>
</comment>
<comment type="cofactor">
    <cofactor evidence="1">
        <name>heme</name>
        <dbReference type="ChEBI" id="CHEBI:30413"/>
    </cofactor>
</comment>
<comment type="pathway">
    <text evidence="3">Secondary metabolite biosynthesis.</text>
</comment>
<comment type="induction">
    <text evidence="3">Expression is under the control of the azaphilone cluster-specific transcription factor azaR (PubMed:22921072).</text>
</comment>
<comment type="similarity">
    <text evidence="5">Belongs to the cytochrome P450 family.</text>
</comment>
<name>AZAI_ASPNA</name>
<organism>
    <name type="scientific">Aspergillus niger (strain ATCC 1015 / CBS 113.46 / FGSC A1144 / LSHB Ac4 / NCTC 3858a / NRRL 328 / USDA 3528.7)</name>
    <dbReference type="NCBI Taxonomy" id="380704"/>
    <lineage>
        <taxon>Eukaryota</taxon>
        <taxon>Fungi</taxon>
        <taxon>Dikarya</taxon>
        <taxon>Ascomycota</taxon>
        <taxon>Pezizomycotina</taxon>
        <taxon>Eurotiomycetes</taxon>
        <taxon>Eurotiomycetidae</taxon>
        <taxon>Eurotiales</taxon>
        <taxon>Aspergillaceae</taxon>
        <taxon>Aspergillus</taxon>
        <taxon>Aspergillus subgen. Circumdati</taxon>
    </lineage>
</organism>
<accession>G3XMC3</accession>
<keyword id="KW-0349">Heme</keyword>
<keyword id="KW-0408">Iron</keyword>
<keyword id="KW-0479">Metal-binding</keyword>
<keyword id="KW-0503">Monooxygenase</keyword>
<keyword id="KW-0560">Oxidoreductase</keyword>
<keyword id="KW-0732">Signal</keyword>
<feature type="signal peptide" evidence="2">
    <location>
        <begin position="1"/>
        <end position="28"/>
    </location>
</feature>
<feature type="chain" id="PRO_0000437595" description="Cytochrome P450 monooxygenase azaI" evidence="2">
    <location>
        <begin position="29"/>
        <end position="467"/>
    </location>
</feature>
<feature type="binding site" description="axial binding residue" evidence="1">
    <location>
        <position position="411"/>
    </location>
    <ligand>
        <name>heme</name>
        <dbReference type="ChEBI" id="CHEBI:30413"/>
    </ligand>
    <ligandPart>
        <name>Fe</name>
        <dbReference type="ChEBI" id="CHEBI:18248"/>
    </ligandPart>
</feature>